<keyword id="KW-0027">Amidation</keyword>
<keyword id="KW-0878">Amphibian defense peptide</keyword>
<keyword id="KW-0044">Antibiotic</keyword>
<keyword id="KW-0929">Antimicrobial</keyword>
<keyword id="KW-0165">Cleavage on pair of basic residues</keyword>
<keyword id="KW-0204">Cytolysis</keyword>
<keyword id="KW-0903">Direct protein sequencing</keyword>
<keyword id="KW-0295">Fungicide</keyword>
<keyword id="KW-0354">Hemolysis</keyword>
<keyword id="KW-0964">Secreted</keyword>
<keyword id="KW-0732">Signal</keyword>
<comment type="function">
    <text evidence="3">Maximin-3 shows antibacterial activity against both Gram-positive and Gram-negative bacteria. It also shows antimicrobial activity against the fungus C.albicans, but not against A.flavus nor P.uticale. It has little hemolytic activity. It possess a significant cytotoxicity against tumor cell lines. It possess a significant anti-HIV activity. It shows high spermicidal activity.</text>
</comment>
<comment type="function">
    <text evidence="3">Maximin-H3 shows antibacterial activity against both Gram-positive and Gram-negative bacteria. It also shows antimicrobial activity against the fungus C.albicans. Shows strong hemolytic activity.</text>
</comment>
<comment type="subcellular location">
    <subcellularLocation>
        <location>Secreted</location>
    </subcellularLocation>
</comment>
<comment type="tissue specificity">
    <text>Expressed by the skin glands.</text>
</comment>
<comment type="mass spectrometry" mass="2698.0" method="FAB" evidence="3">
    <molecule>Maximin-3</molecule>
</comment>
<comment type="mass spectrometry" mass="1944.0" method="FAB" evidence="3">
    <molecule>Maximin-H3</molecule>
</comment>
<comment type="similarity">
    <text evidence="5">Belongs to the bombinin family.</text>
</comment>
<dbReference type="EMBL" id="AY848992">
    <property type="protein sequence ID" value="AAX50213.1"/>
    <property type="molecule type" value="mRNA"/>
</dbReference>
<dbReference type="EMBL" id="AY848993">
    <property type="protein sequence ID" value="AAX50214.1"/>
    <property type="molecule type" value="mRNA"/>
</dbReference>
<dbReference type="EMBL" id="AY848978">
    <property type="protein sequence ID" value="AAX50199.1"/>
    <property type="molecule type" value="mRNA"/>
</dbReference>
<dbReference type="SMR" id="Q58T68"/>
<dbReference type="GO" id="GO:0005576">
    <property type="term" value="C:extracellular region"/>
    <property type="evidence" value="ECO:0007669"/>
    <property type="project" value="UniProtKB-SubCell"/>
</dbReference>
<dbReference type="GO" id="GO:0042742">
    <property type="term" value="P:defense response to bacterium"/>
    <property type="evidence" value="ECO:0007669"/>
    <property type="project" value="UniProtKB-KW"/>
</dbReference>
<dbReference type="GO" id="GO:0050832">
    <property type="term" value="P:defense response to fungus"/>
    <property type="evidence" value="ECO:0007669"/>
    <property type="project" value="UniProtKB-KW"/>
</dbReference>
<dbReference type="GO" id="GO:0031640">
    <property type="term" value="P:killing of cells of another organism"/>
    <property type="evidence" value="ECO:0007669"/>
    <property type="project" value="UniProtKB-KW"/>
</dbReference>
<dbReference type="InterPro" id="IPR007962">
    <property type="entry name" value="Bombinin"/>
</dbReference>
<dbReference type="Pfam" id="PF05298">
    <property type="entry name" value="Bombinin"/>
    <property type="match status" value="1"/>
</dbReference>
<protein>
    <recommendedName>
        <fullName>Maximins 3/H3 type 1</fullName>
    </recommendedName>
    <component>
        <recommendedName>
            <fullName>Maximin-3</fullName>
        </recommendedName>
    </component>
    <component>
        <recommendedName>
            <fullName>Maximin-H3</fullName>
        </recommendedName>
    </component>
</protein>
<reference key="1">
    <citation type="journal article" date="2005" name="Eur. J. Immunol.">
        <title>Variety of antimicrobial peptides in the Bombina maxima toad and evidence of their rapid diversification.</title>
        <authorList>
            <person name="Lee W.-H."/>
            <person name="Li Y."/>
            <person name="Lai R."/>
            <person name="Li S."/>
            <person name="Zhang Y."/>
            <person name="Wang W."/>
        </authorList>
    </citation>
    <scope>NUCLEOTIDE SEQUENCE [MRNA]</scope>
    <scope>AMIDATION AT ILE-144</scope>
    <source>
        <tissue>Skin</tissue>
    </source>
</reference>
<reference key="2">
    <citation type="journal article" date="2002" name="Peptides">
        <title>Antimicrobial peptides from skin secretions of Chinese red belly toad Bombina maxima.</title>
        <authorList>
            <person name="Lai R."/>
            <person name="Zheng Y.-T."/>
            <person name="Shen J.-H."/>
            <person name="Liu G.-J."/>
            <person name="Liu H."/>
            <person name="Lee W.-H."/>
            <person name="Tang S.-Z."/>
            <person name="Zhang Y."/>
        </authorList>
    </citation>
    <scope>PROTEIN SEQUENCE OF 45-71 AND 125-144</scope>
    <scope>AMIDATION AT ILE-144</scope>
    <scope>MASS SPECTROMETRY</scope>
    <scope>FUNCTION OF MAXIMIN-3 AND MAXIMIN-H3</scope>
</reference>
<proteinExistence type="evidence at protein level"/>
<sequence length="145" mass="16166">MNFKYIVAVSFLIASAYARSVQNDEQSLSQRDVLEEEESLREIRGIGGKILSGLKTALKGAAKELASTYLHRKRIAEDHEVMKRLEAVMRDLDSLDHPEEASERETRGFNQEEIANLFTKKEKRILGPVLGLVGNALGGLIKKIG</sequence>
<accession>Q58T68</accession>
<evidence type="ECO:0000250" key="1"/>
<evidence type="ECO:0000255" key="2"/>
<evidence type="ECO:0000269" key="3">
    <source>
    </source>
</evidence>
<evidence type="ECO:0000269" key="4">
    <source>
    </source>
</evidence>
<evidence type="ECO:0000305" key="5"/>
<feature type="signal peptide" evidence="2">
    <location>
        <begin position="1"/>
        <end position="18"/>
    </location>
</feature>
<feature type="propeptide" id="PRO_0000003120" evidence="1">
    <location>
        <begin position="19"/>
        <end position="43"/>
    </location>
</feature>
<feature type="peptide" id="PRO_0000003121" description="Maximin-3">
    <location>
        <begin position="45"/>
        <end position="71"/>
    </location>
</feature>
<feature type="propeptide" id="PRO_0000003122" evidence="3">
    <location>
        <begin position="74"/>
        <end position="124"/>
    </location>
</feature>
<feature type="peptide" id="PRO_0000003123" description="Maximin-H3">
    <location>
        <begin position="125"/>
        <end position="144"/>
    </location>
</feature>
<feature type="modified residue" description="Isoleucine amide" evidence="3 4">
    <location>
        <position position="144"/>
    </location>
</feature>
<name>M3H31_BOMMX</name>
<organism>
    <name type="scientific">Bombina maxima</name>
    <name type="common">Giant fire-bellied toad</name>
    <name type="synonym">Chinese red belly toad</name>
    <dbReference type="NCBI Taxonomy" id="161274"/>
    <lineage>
        <taxon>Eukaryota</taxon>
        <taxon>Metazoa</taxon>
        <taxon>Chordata</taxon>
        <taxon>Craniata</taxon>
        <taxon>Vertebrata</taxon>
        <taxon>Euteleostomi</taxon>
        <taxon>Amphibia</taxon>
        <taxon>Batrachia</taxon>
        <taxon>Anura</taxon>
        <taxon>Bombinatoridae</taxon>
        <taxon>Bombina</taxon>
    </lineage>
</organism>